<name>OBG_FLAJ1</name>
<sequence>MTEGNFVDYVKIYVSSGKGGKGSTHLHREKFIEKGGPDGGDGGRGGHVYLVGNKGLWTLFHLKFARHIKAGHGGDGGSDRSTGADGEDKFIEVPLGTVVKDKETGEVLFEITEDGEKRILAKGGKGGLGNWHFRSSTNQTPRYAQPGLPGLEMDVILELKVLADVGLVGFPNAGKSTLLSVLTSAKPKIADYPFTTLKPNLGIVAYRDFQSFVIADIPGIIEGAAEGKGLGHYFLRHIERNSTLLFLVPVDTPDIKAEYDILVNELTKYNPEMLDKERLLVISKCDMLDDELKAELKAELDVSFKDIPYMLISSVAQQGLTDLKDKLWKMLNE</sequence>
<accession>A5FMX0</accession>
<protein>
    <recommendedName>
        <fullName evidence="1">GTPase Obg</fullName>
        <ecNumber evidence="1">3.6.5.-</ecNumber>
    </recommendedName>
    <alternativeName>
        <fullName evidence="1">GTP-binding protein Obg</fullName>
    </alternativeName>
</protein>
<gene>
    <name evidence="1" type="primary">obg</name>
    <name type="ordered locus">Fjoh_0418</name>
</gene>
<feature type="chain" id="PRO_0000385933" description="GTPase Obg">
    <location>
        <begin position="1"/>
        <end position="333"/>
    </location>
</feature>
<feature type="domain" description="Obg" evidence="2">
    <location>
        <begin position="4"/>
        <end position="162"/>
    </location>
</feature>
<feature type="domain" description="OBG-type G" evidence="1">
    <location>
        <begin position="163"/>
        <end position="332"/>
    </location>
</feature>
<feature type="binding site" evidence="1">
    <location>
        <begin position="169"/>
        <end position="176"/>
    </location>
    <ligand>
        <name>GTP</name>
        <dbReference type="ChEBI" id="CHEBI:37565"/>
    </ligand>
</feature>
<feature type="binding site" evidence="1">
    <location>
        <position position="176"/>
    </location>
    <ligand>
        <name>Mg(2+)</name>
        <dbReference type="ChEBI" id="CHEBI:18420"/>
    </ligand>
</feature>
<feature type="binding site" evidence="1">
    <location>
        <begin position="194"/>
        <end position="198"/>
    </location>
    <ligand>
        <name>GTP</name>
        <dbReference type="ChEBI" id="CHEBI:37565"/>
    </ligand>
</feature>
<feature type="binding site" evidence="1">
    <location>
        <position position="196"/>
    </location>
    <ligand>
        <name>Mg(2+)</name>
        <dbReference type="ChEBI" id="CHEBI:18420"/>
    </ligand>
</feature>
<feature type="binding site" evidence="1">
    <location>
        <begin position="216"/>
        <end position="219"/>
    </location>
    <ligand>
        <name>GTP</name>
        <dbReference type="ChEBI" id="CHEBI:37565"/>
    </ligand>
</feature>
<feature type="binding site" evidence="1">
    <location>
        <begin position="283"/>
        <end position="286"/>
    </location>
    <ligand>
        <name>GTP</name>
        <dbReference type="ChEBI" id="CHEBI:37565"/>
    </ligand>
</feature>
<feature type="binding site" evidence="1">
    <location>
        <begin position="313"/>
        <end position="315"/>
    </location>
    <ligand>
        <name>GTP</name>
        <dbReference type="ChEBI" id="CHEBI:37565"/>
    </ligand>
</feature>
<keyword id="KW-0963">Cytoplasm</keyword>
<keyword id="KW-0342">GTP-binding</keyword>
<keyword id="KW-0378">Hydrolase</keyword>
<keyword id="KW-0460">Magnesium</keyword>
<keyword id="KW-0479">Metal-binding</keyword>
<keyword id="KW-0547">Nucleotide-binding</keyword>
<dbReference type="EC" id="3.6.5.-" evidence="1"/>
<dbReference type="EMBL" id="CP000685">
    <property type="protein sequence ID" value="ABQ03454.1"/>
    <property type="molecule type" value="Genomic_DNA"/>
</dbReference>
<dbReference type="SMR" id="A5FMX0"/>
<dbReference type="STRING" id="376686.Fjoh_0418"/>
<dbReference type="KEGG" id="fjo:Fjoh_0418"/>
<dbReference type="eggNOG" id="COG0536">
    <property type="taxonomic scope" value="Bacteria"/>
</dbReference>
<dbReference type="HOGENOM" id="CLU_011747_2_0_10"/>
<dbReference type="OrthoDB" id="9807318at2"/>
<dbReference type="Proteomes" id="UP000006694">
    <property type="component" value="Chromosome"/>
</dbReference>
<dbReference type="GO" id="GO:0005737">
    <property type="term" value="C:cytoplasm"/>
    <property type="evidence" value="ECO:0007669"/>
    <property type="project" value="UniProtKB-SubCell"/>
</dbReference>
<dbReference type="GO" id="GO:0005525">
    <property type="term" value="F:GTP binding"/>
    <property type="evidence" value="ECO:0007669"/>
    <property type="project" value="UniProtKB-UniRule"/>
</dbReference>
<dbReference type="GO" id="GO:0003924">
    <property type="term" value="F:GTPase activity"/>
    <property type="evidence" value="ECO:0007669"/>
    <property type="project" value="UniProtKB-UniRule"/>
</dbReference>
<dbReference type="GO" id="GO:0000287">
    <property type="term" value="F:magnesium ion binding"/>
    <property type="evidence" value="ECO:0007669"/>
    <property type="project" value="InterPro"/>
</dbReference>
<dbReference type="GO" id="GO:0042254">
    <property type="term" value="P:ribosome biogenesis"/>
    <property type="evidence" value="ECO:0007669"/>
    <property type="project" value="UniProtKB-UniRule"/>
</dbReference>
<dbReference type="CDD" id="cd01898">
    <property type="entry name" value="Obg"/>
    <property type="match status" value="1"/>
</dbReference>
<dbReference type="FunFam" id="2.70.210.12:FF:000001">
    <property type="entry name" value="GTPase Obg"/>
    <property type="match status" value="1"/>
</dbReference>
<dbReference type="Gene3D" id="2.70.210.12">
    <property type="entry name" value="GTP1/OBG domain"/>
    <property type="match status" value="1"/>
</dbReference>
<dbReference type="Gene3D" id="3.40.50.300">
    <property type="entry name" value="P-loop containing nucleotide triphosphate hydrolases"/>
    <property type="match status" value="1"/>
</dbReference>
<dbReference type="HAMAP" id="MF_01454">
    <property type="entry name" value="GTPase_Obg"/>
    <property type="match status" value="1"/>
</dbReference>
<dbReference type="InterPro" id="IPR031167">
    <property type="entry name" value="G_OBG"/>
</dbReference>
<dbReference type="InterPro" id="IPR006073">
    <property type="entry name" value="GTP-bd"/>
</dbReference>
<dbReference type="InterPro" id="IPR014100">
    <property type="entry name" value="GTP-bd_Obg/CgtA"/>
</dbReference>
<dbReference type="InterPro" id="IPR006074">
    <property type="entry name" value="GTP1-OBG_CS"/>
</dbReference>
<dbReference type="InterPro" id="IPR006169">
    <property type="entry name" value="GTP1_OBG_dom"/>
</dbReference>
<dbReference type="InterPro" id="IPR036726">
    <property type="entry name" value="GTP1_OBG_dom_sf"/>
</dbReference>
<dbReference type="InterPro" id="IPR045086">
    <property type="entry name" value="OBG_GTPase"/>
</dbReference>
<dbReference type="InterPro" id="IPR027417">
    <property type="entry name" value="P-loop_NTPase"/>
</dbReference>
<dbReference type="NCBIfam" id="TIGR02729">
    <property type="entry name" value="Obg_CgtA"/>
    <property type="match status" value="1"/>
</dbReference>
<dbReference type="NCBIfam" id="NF008955">
    <property type="entry name" value="PRK12297.1"/>
    <property type="match status" value="1"/>
</dbReference>
<dbReference type="NCBIfam" id="NF008956">
    <property type="entry name" value="PRK12299.1"/>
    <property type="match status" value="1"/>
</dbReference>
<dbReference type="PANTHER" id="PTHR11702">
    <property type="entry name" value="DEVELOPMENTALLY REGULATED GTP-BINDING PROTEIN-RELATED"/>
    <property type="match status" value="1"/>
</dbReference>
<dbReference type="PANTHER" id="PTHR11702:SF31">
    <property type="entry name" value="MITOCHONDRIAL RIBOSOME-ASSOCIATED GTPASE 2"/>
    <property type="match status" value="1"/>
</dbReference>
<dbReference type="Pfam" id="PF01018">
    <property type="entry name" value="GTP1_OBG"/>
    <property type="match status" value="1"/>
</dbReference>
<dbReference type="Pfam" id="PF01926">
    <property type="entry name" value="MMR_HSR1"/>
    <property type="match status" value="1"/>
</dbReference>
<dbReference type="PIRSF" id="PIRSF002401">
    <property type="entry name" value="GTP_bd_Obg/CgtA"/>
    <property type="match status" value="1"/>
</dbReference>
<dbReference type="PRINTS" id="PR00326">
    <property type="entry name" value="GTP1OBG"/>
</dbReference>
<dbReference type="SUPFAM" id="SSF82051">
    <property type="entry name" value="Obg GTP-binding protein N-terminal domain"/>
    <property type="match status" value="1"/>
</dbReference>
<dbReference type="SUPFAM" id="SSF52540">
    <property type="entry name" value="P-loop containing nucleoside triphosphate hydrolases"/>
    <property type="match status" value="1"/>
</dbReference>
<dbReference type="PROSITE" id="PS51710">
    <property type="entry name" value="G_OBG"/>
    <property type="match status" value="1"/>
</dbReference>
<dbReference type="PROSITE" id="PS00905">
    <property type="entry name" value="GTP1_OBG"/>
    <property type="match status" value="1"/>
</dbReference>
<dbReference type="PROSITE" id="PS51883">
    <property type="entry name" value="OBG"/>
    <property type="match status" value="1"/>
</dbReference>
<comment type="function">
    <text evidence="1">An essential GTPase which binds GTP, GDP and possibly (p)ppGpp with moderate affinity, with high nucleotide exchange rates and a fairly low GTP hydrolysis rate. Plays a role in control of the cell cycle, stress response, ribosome biogenesis and in those bacteria that undergo differentiation, in morphogenesis control.</text>
</comment>
<comment type="cofactor">
    <cofactor evidence="1">
        <name>Mg(2+)</name>
        <dbReference type="ChEBI" id="CHEBI:18420"/>
    </cofactor>
</comment>
<comment type="subunit">
    <text evidence="1">Monomer.</text>
</comment>
<comment type="subcellular location">
    <subcellularLocation>
        <location evidence="1">Cytoplasm</location>
    </subcellularLocation>
</comment>
<comment type="similarity">
    <text evidence="1">Belongs to the TRAFAC class OBG-HflX-like GTPase superfamily. OBG GTPase family.</text>
</comment>
<reference key="1">
    <citation type="journal article" date="2009" name="Appl. Environ. Microbiol.">
        <title>Novel features of the polysaccharide-digesting gliding bacterium Flavobacterium johnsoniae as revealed by genome sequence analysis.</title>
        <authorList>
            <person name="McBride M.J."/>
            <person name="Xie G."/>
            <person name="Martens E.C."/>
            <person name="Lapidus A."/>
            <person name="Henrissat B."/>
            <person name="Rhodes R.G."/>
            <person name="Goltsman E."/>
            <person name="Wang W."/>
            <person name="Xu J."/>
            <person name="Hunnicutt D.W."/>
            <person name="Staroscik A.M."/>
            <person name="Hoover T.R."/>
            <person name="Cheng Y.Q."/>
            <person name="Stein J.L."/>
        </authorList>
    </citation>
    <scope>NUCLEOTIDE SEQUENCE [LARGE SCALE GENOMIC DNA]</scope>
    <source>
        <strain>ATCC 17061 / DSM 2064 / JCM 8514 / BCRC 14874 / CCUG 350202 / NBRC 14942 / NCIMB 11054 / UW101</strain>
    </source>
</reference>
<evidence type="ECO:0000255" key="1">
    <source>
        <dbReference type="HAMAP-Rule" id="MF_01454"/>
    </source>
</evidence>
<evidence type="ECO:0000255" key="2">
    <source>
        <dbReference type="PROSITE-ProRule" id="PRU01231"/>
    </source>
</evidence>
<proteinExistence type="inferred from homology"/>
<organism>
    <name type="scientific">Flavobacterium johnsoniae (strain ATCC 17061 / DSM 2064 / JCM 8514 / BCRC 14874 / CCUG 350202 / NBRC 14942 / NCIMB 11054 / UW101)</name>
    <name type="common">Cytophaga johnsonae</name>
    <dbReference type="NCBI Taxonomy" id="376686"/>
    <lineage>
        <taxon>Bacteria</taxon>
        <taxon>Pseudomonadati</taxon>
        <taxon>Bacteroidota</taxon>
        <taxon>Flavobacteriia</taxon>
        <taxon>Flavobacteriales</taxon>
        <taxon>Flavobacteriaceae</taxon>
        <taxon>Flavobacterium</taxon>
    </lineage>
</organism>